<name>CYSJ_YERPS</name>
<comment type="function">
    <text evidence="1">Component of the sulfite reductase complex that catalyzes the 6-electron reduction of sulfite to sulfide. This is one of several activities required for the biosynthesis of L-cysteine from sulfate. The flavoprotein component catalyzes the electron flow from NADPH -&gt; FAD -&gt; FMN to the hemoprotein component.</text>
</comment>
<comment type="catalytic activity">
    <reaction evidence="1">
        <text>hydrogen sulfide + 3 NADP(+) + 3 H2O = sulfite + 3 NADPH + 4 H(+)</text>
        <dbReference type="Rhea" id="RHEA:13801"/>
        <dbReference type="ChEBI" id="CHEBI:15377"/>
        <dbReference type="ChEBI" id="CHEBI:15378"/>
        <dbReference type="ChEBI" id="CHEBI:17359"/>
        <dbReference type="ChEBI" id="CHEBI:29919"/>
        <dbReference type="ChEBI" id="CHEBI:57783"/>
        <dbReference type="ChEBI" id="CHEBI:58349"/>
        <dbReference type="EC" id="1.8.1.2"/>
    </reaction>
</comment>
<comment type="cofactor">
    <cofactor evidence="1">
        <name>FAD</name>
        <dbReference type="ChEBI" id="CHEBI:57692"/>
    </cofactor>
    <text evidence="1">Binds 1 FAD per subunit.</text>
</comment>
<comment type="cofactor">
    <cofactor evidence="1">
        <name>FMN</name>
        <dbReference type="ChEBI" id="CHEBI:58210"/>
    </cofactor>
    <text evidence="1">Binds 1 FMN per subunit.</text>
</comment>
<comment type="pathway">
    <text evidence="1">Sulfur metabolism; hydrogen sulfide biosynthesis; hydrogen sulfide from sulfite (NADPH route): step 1/1.</text>
</comment>
<comment type="subunit">
    <text evidence="1">Alpha(8)-beta(8). The alpha component is a flavoprotein, the beta component is a hemoprotein.</text>
</comment>
<comment type="similarity">
    <text evidence="1">Belongs to the NADPH-dependent sulphite reductase flavoprotein subunit CysJ family.</text>
</comment>
<comment type="similarity">
    <text evidence="1">In the N-terminal section; belongs to the flavodoxin family.</text>
</comment>
<comment type="similarity">
    <text evidence="1">In the C-terminal section; belongs to the flavoprotein pyridine nucleotide cytochrome reductase family.</text>
</comment>
<dbReference type="EC" id="1.8.1.2" evidence="1"/>
<dbReference type="EMBL" id="BX936398">
    <property type="protein sequence ID" value="CAH19999.1"/>
    <property type="molecule type" value="Genomic_DNA"/>
</dbReference>
<dbReference type="RefSeq" id="WP_011191772.1">
    <property type="nucleotide sequence ID" value="NC_006155.1"/>
</dbReference>
<dbReference type="SMR" id="Q66ED4"/>
<dbReference type="GeneID" id="49787235"/>
<dbReference type="KEGG" id="ypo:BZ17_1797"/>
<dbReference type="KEGG" id="yps:YPTB0759"/>
<dbReference type="PATRIC" id="fig|273123.14.peg.1902"/>
<dbReference type="UniPathway" id="UPA00140">
    <property type="reaction ID" value="UER00207"/>
</dbReference>
<dbReference type="Proteomes" id="UP000001011">
    <property type="component" value="Chromosome"/>
</dbReference>
<dbReference type="GO" id="GO:0005829">
    <property type="term" value="C:cytosol"/>
    <property type="evidence" value="ECO:0007669"/>
    <property type="project" value="TreeGrafter"/>
</dbReference>
<dbReference type="GO" id="GO:0050660">
    <property type="term" value="F:flavin adenine dinucleotide binding"/>
    <property type="evidence" value="ECO:0007669"/>
    <property type="project" value="InterPro"/>
</dbReference>
<dbReference type="GO" id="GO:0010181">
    <property type="term" value="F:FMN binding"/>
    <property type="evidence" value="ECO:0007669"/>
    <property type="project" value="InterPro"/>
</dbReference>
<dbReference type="GO" id="GO:0004783">
    <property type="term" value="F:sulfite reductase (NADPH) activity"/>
    <property type="evidence" value="ECO:0007669"/>
    <property type="project" value="UniProtKB-UniRule"/>
</dbReference>
<dbReference type="GO" id="GO:0019344">
    <property type="term" value="P:cysteine biosynthetic process"/>
    <property type="evidence" value="ECO:0007669"/>
    <property type="project" value="UniProtKB-KW"/>
</dbReference>
<dbReference type="GO" id="GO:0070814">
    <property type="term" value="P:hydrogen sulfide biosynthetic process"/>
    <property type="evidence" value="ECO:0007669"/>
    <property type="project" value="UniProtKB-UniRule"/>
</dbReference>
<dbReference type="GO" id="GO:0000103">
    <property type="term" value="P:sulfate assimilation"/>
    <property type="evidence" value="ECO:0007669"/>
    <property type="project" value="UniProtKB-UniRule"/>
</dbReference>
<dbReference type="CDD" id="cd06199">
    <property type="entry name" value="SiR"/>
    <property type="match status" value="1"/>
</dbReference>
<dbReference type="FunFam" id="3.40.50.80:FF:000001">
    <property type="entry name" value="NADPH--cytochrome P450 reductase 1"/>
    <property type="match status" value="1"/>
</dbReference>
<dbReference type="FunFam" id="1.20.990.10:FF:000004">
    <property type="entry name" value="Sulfite reductase [NADPH] flavoprotein alpha-component"/>
    <property type="match status" value="1"/>
</dbReference>
<dbReference type="FunFam" id="3.40.50.360:FF:000018">
    <property type="entry name" value="Sulfite reductase [NADPH] flavoprotein alpha-component"/>
    <property type="match status" value="1"/>
</dbReference>
<dbReference type="Gene3D" id="3.40.50.360">
    <property type="match status" value="1"/>
</dbReference>
<dbReference type="Gene3D" id="1.20.990.10">
    <property type="entry name" value="NADPH-cytochrome p450 Reductase, Chain A, domain 3"/>
    <property type="match status" value="1"/>
</dbReference>
<dbReference type="Gene3D" id="3.40.50.80">
    <property type="entry name" value="Nucleotide-binding domain of ferredoxin-NADP reductase (FNR) module"/>
    <property type="match status" value="1"/>
</dbReference>
<dbReference type="Gene3D" id="2.40.30.10">
    <property type="entry name" value="Translation factors"/>
    <property type="match status" value="1"/>
</dbReference>
<dbReference type="HAMAP" id="MF_01541">
    <property type="entry name" value="CysJ"/>
    <property type="match status" value="1"/>
</dbReference>
<dbReference type="InterPro" id="IPR010199">
    <property type="entry name" value="CysJ"/>
</dbReference>
<dbReference type="InterPro" id="IPR003097">
    <property type="entry name" value="CysJ-like_FAD-binding"/>
</dbReference>
<dbReference type="InterPro" id="IPR029758">
    <property type="entry name" value="CysJ_Proteobact"/>
</dbReference>
<dbReference type="InterPro" id="IPR017927">
    <property type="entry name" value="FAD-bd_FR_type"/>
</dbReference>
<dbReference type="InterPro" id="IPR001094">
    <property type="entry name" value="Flavdoxin-like"/>
</dbReference>
<dbReference type="InterPro" id="IPR008254">
    <property type="entry name" value="Flavodoxin/NO_synth"/>
</dbReference>
<dbReference type="InterPro" id="IPR001709">
    <property type="entry name" value="Flavoprot_Pyr_Nucl_cyt_Rdtase"/>
</dbReference>
<dbReference type="InterPro" id="IPR029039">
    <property type="entry name" value="Flavoprotein-like_sf"/>
</dbReference>
<dbReference type="InterPro" id="IPR039261">
    <property type="entry name" value="FNR_nucleotide-bd"/>
</dbReference>
<dbReference type="InterPro" id="IPR023173">
    <property type="entry name" value="NADPH_Cyt_P450_Rdtase_alpha"/>
</dbReference>
<dbReference type="InterPro" id="IPR001433">
    <property type="entry name" value="OxRdtase_FAD/NAD-bd"/>
</dbReference>
<dbReference type="InterPro" id="IPR017938">
    <property type="entry name" value="Riboflavin_synthase-like_b-brl"/>
</dbReference>
<dbReference type="NCBIfam" id="TIGR01931">
    <property type="entry name" value="cysJ"/>
    <property type="match status" value="1"/>
</dbReference>
<dbReference type="NCBIfam" id="NF008197">
    <property type="entry name" value="PRK10953.1"/>
    <property type="match status" value="1"/>
</dbReference>
<dbReference type="PANTHER" id="PTHR19384:SF128">
    <property type="entry name" value="NADPH OXIDOREDUCTASE A"/>
    <property type="match status" value="1"/>
</dbReference>
<dbReference type="PANTHER" id="PTHR19384">
    <property type="entry name" value="NITRIC OXIDE SYNTHASE-RELATED"/>
    <property type="match status" value="1"/>
</dbReference>
<dbReference type="Pfam" id="PF00667">
    <property type="entry name" value="FAD_binding_1"/>
    <property type="match status" value="1"/>
</dbReference>
<dbReference type="Pfam" id="PF00258">
    <property type="entry name" value="Flavodoxin_1"/>
    <property type="match status" value="1"/>
</dbReference>
<dbReference type="Pfam" id="PF00175">
    <property type="entry name" value="NAD_binding_1"/>
    <property type="match status" value="1"/>
</dbReference>
<dbReference type="PIRSF" id="PIRSF000207">
    <property type="entry name" value="SiR-FP_CysJ"/>
    <property type="match status" value="1"/>
</dbReference>
<dbReference type="PRINTS" id="PR00369">
    <property type="entry name" value="FLAVODOXIN"/>
</dbReference>
<dbReference type="PRINTS" id="PR00371">
    <property type="entry name" value="FPNCR"/>
</dbReference>
<dbReference type="SUPFAM" id="SSF52343">
    <property type="entry name" value="Ferredoxin reductase-like, C-terminal NADP-linked domain"/>
    <property type="match status" value="1"/>
</dbReference>
<dbReference type="SUPFAM" id="SSF52218">
    <property type="entry name" value="Flavoproteins"/>
    <property type="match status" value="1"/>
</dbReference>
<dbReference type="SUPFAM" id="SSF63380">
    <property type="entry name" value="Riboflavin synthase domain-like"/>
    <property type="match status" value="1"/>
</dbReference>
<dbReference type="PROSITE" id="PS51384">
    <property type="entry name" value="FAD_FR"/>
    <property type="match status" value="1"/>
</dbReference>
<dbReference type="PROSITE" id="PS50902">
    <property type="entry name" value="FLAVODOXIN_LIKE"/>
    <property type="match status" value="1"/>
</dbReference>
<protein>
    <recommendedName>
        <fullName evidence="1">Sulfite reductase [NADPH] flavoprotein alpha-component</fullName>
        <shortName evidence="1">SiR-FP</shortName>
        <ecNumber evidence="1">1.8.1.2</ecNumber>
    </recommendedName>
</protein>
<evidence type="ECO:0000255" key="1">
    <source>
        <dbReference type="HAMAP-Rule" id="MF_01541"/>
    </source>
</evidence>
<proteinExistence type="inferred from homology"/>
<reference key="1">
    <citation type="journal article" date="2004" name="Proc. Natl. Acad. Sci. U.S.A.">
        <title>Insights into the evolution of Yersinia pestis through whole-genome comparison with Yersinia pseudotuberculosis.</title>
        <authorList>
            <person name="Chain P.S.G."/>
            <person name="Carniel E."/>
            <person name="Larimer F.W."/>
            <person name="Lamerdin J."/>
            <person name="Stoutland P.O."/>
            <person name="Regala W.M."/>
            <person name="Georgescu A.M."/>
            <person name="Vergez L.M."/>
            <person name="Land M.L."/>
            <person name="Motin V.L."/>
            <person name="Brubaker R.R."/>
            <person name="Fowler J."/>
            <person name="Hinnebusch J."/>
            <person name="Marceau M."/>
            <person name="Medigue C."/>
            <person name="Simonet M."/>
            <person name="Chenal-Francisque V."/>
            <person name="Souza B."/>
            <person name="Dacheux D."/>
            <person name="Elliott J.M."/>
            <person name="Derbise A."/>
            <person name="Hauser L.J."/>
            <person name="Garcia E."/>
        </authorList>
    </citation>
    <scope>NUCLEOTIDE SEQUENCE [LARGE SCALE GENOMIC DNA]</scope>
    <source>
        <strain>IP32953</strain>
    </source>
</reference>
<accession>Q66ED4</accession>
<keyword id="KW-0028">Amino-acid biosynthesis</keyword>
<keyword id="KW-0198">Cysteine biosynthesis</keyword>
<keyword id="KW-0249">Electron transport</keyword>
<keyword id="KW-0274">FAD</keyword>
<keyword id="KW-0285">Flavoprotein</keyword>
<keyword id="KW-0288">FMN</keyword>
<keyword id="KW-0521">NADP</keyword>
<keyword id="KW-0560">Oxidoreductase</keyword>
<keyword id="KW-0813">Transport</keyword>
<gene>
    <name evidence="1" type="primary">cysJ</name>
    <name type="ordered locus">YPTB0759</name>
</gene>
<organism>
    <name type="scientific">Yersinia pseudotuberculosis serotype I (strain IP32953)</name>
    <dbReference type="NCBI Taxonomy" id="273123"/>
    <lineage>
        <taxon>Bacteria</taxon>
        <taxon>Pseudomonadati</taxon>
        <taxon>Pseudomonadota</taxon>
        <taxon>Gammaproteobacteria</taxon>
        <taxon>Enterobacterales</taxon>
        <taxon>Yersiniaceae</taxon>
        <taxon>Yersinia</taxon>
    </lineage>
</organism>
<sequence>MTTQAPPTSLLPLSPEQLARLQAAVGEFSPTQMAWLSGYFWGMVNQQPGAVASPAVAAPPPVTVTLISASQTGNARRLAEQLRDDLLAAQLSVNLVNAGDYKFKQIAQERLLVVVASTQGEGEPAEEAVALHKFLFSKKAPKLSETAFAVFGLGDTSYEHFCQAGKDFDSKLAELGAQRLLDRVDADVEYQVQAQQWRQQVVATLQAKVPAQSTAPTQFIAPTQFIAPTQSTTPAAAAITSGGTTTVSPYSKTAPLTAQLSVQQKVTGRNSEKDVRHIEIDLGDSGLRYQPGDALGVWFDNDPALVEELLALLWLKGDEPVSIDGQNMPLAQALLSHLELTQNTTLIVDKYAALSRDETLIALLADKPALQLYAKNTPFVDMVRQAPSDLNADQLVGLLRPLTPRLYSIASSQAETENEVHITVGVVRYDIDGRARSGGASGYLADRLEVDGDIRVFIEHNDNFRLPANPETPVIMIGPGTGIAPFRAFMQQREVDGASGKNWLFFGNPHFTEDFLYQVEWQRYVKEGVLTRIDLAWSRDQAHKIYVQDKLREQGAELWNWIQQGAHIYVCGDANRMAKDVEQVLLDVVALHGAMDAEQADEYLSELRQARRYQRDVY</sequence>
<feature type="chain" id="PRO_0000199945" description="Sulfite reductase [NADPH] flavoprotein alpha-component">
    <location>
        <begin position="1"/>
        <end position="618"/>
    </location>
</feature>
<feature type="domain" description="Flavodoxin-like" evidence="1">
    <location>
        <begin position="64"/>
        <end position="202"/>
    </location>
</feature>
<feature type="domain" description="FAD-binding FR-type" evidence="1">
    <location>
        <begin position="253"/>
        <end position="467"/>
    </location>
</feature>
<feature type="binding site" evidence="1">
    <location>
        <begin position="70"/>
        <end position="75"/>
    </location>
    <ligand>
        <name>FMN</name>
        <dbReference type="ChEBI" id="CHEBI:58210"/>
    </ligand>
</feature>
<feature type="binding site" evidence="1">
    <location>
        <begin position="117"/>
        <end position="120"/>
    </location>
    <ligand>
        <name>FMN</name>
        <dbReference type="ChEBI" id="CHEBI:58210"/>
    </ligand>
</feature>
<feature type="binding site" evidence="1">
    <location>
        <begin position="153"/>
        <end position="162"/>
    </location>
    <ligand>
        <name>FMN</name>
        <dbReference type="ChEBI" id="CHEBI:58210"/>
    </ligand>
</feature>
<feature type="binding site" evidence="1">
    <location>
        <position position="341"/>
    </location>
    <ligand>
        <name>FAD</name>
        <dbReference type="ChEBI" id="CHEBI:57692"/>
    </ligand>
</feature>
<feature type="binding site" evidence="1">
    <location>
        <position position="375"/>
    </location>
    <ligand>
        <name>FAD</name>
        <dbReference type="ChEBI" id="CHEBI:57692"/>
    </ligand>
</feature>
<feature type="binding site" evidence="1">
    <location>
        <begin position="405"/>
        <end position="408"/>
    </location>
    <ligand>
        <name>FAD</name>
        <dbReference type="ChEBI" id="CHEBI:57692"/>
    </ligand>
</feature>
<feature type="binding site" evidence="1">
    <location>
        <begin position="423"/>
        <end position="425"/>
    </location>
    <ligand>
        <name>FAD</name>
        <dbReference type="ChEBI" id="CHEBI:57692"/>
    </ligand>
</feature>
<feature type="binding site" evidence="1">
    <location>
        <position position="429"/>
    </location>
    <ligand>
        <name>FAD</name>
        <dbReference type="ChEBI" id="CHEBI:57692"/>
    </ligand>
</feature>
<feature type="binding site" evidence="1">
    <location>
        <begin position="438"/>
        <end position="441"/>
    </location>
    <ligand>
        <name>FAD</name>
        <dbReference type="ChEBI" id="CHEBI:57692"/>
    </ligand>
</feature>
<feature type="binding site" evidence="1">
    <location>
        <begin position="538"/>
        <end position="539"/>
    </location>
    <ligand>
        <name>NADP(+)</name>
        <dbReference type="ChEBI" id="CHEBI:58349"/>
    </ligand>
</feature>
<feature type="binding site" evidence="1">
    <location>
        <begin position="544"/>
        <end position="548"/>
    </location>
    <ligand>
        <name>NADP(+)</name>
        <dbReference type="ChEBI" id="CHEBI:58349"/>
    </ligand>
</feature>
<feature type="binding site" evidence="1">
    <location>
        <position position="580"/>
    </location>
    <ligand>
        <name>NADP(+)</name>
        <dbReference type="ChEBI" id="CHEBI:58349"/>
    </ligand>
</feature>
<feature type="binding site" evidence="1">
    <location>
        <position position="618"/>
    </location>
    <ligand>
        <name>FAD</name>
        <dbReference type="ChEBI" id="CHEBI:57692"/>
    </ligand>
</feature>